<reference key="1">
    <citation type="journal article" date="2002" name="Nature">
        <title>Complete genome sequence of the model actinomycete Streptomyces coelicolor A3(2).</title>
        <authorList>
            <person name="Bentley S.D."/>
            <person name="Chater K.F."/>
            <person name="Cerdeno-Tarraga A.-M."/>
            <person name="Challis G.L."/>
            <person name="Thomson N.R."/>
            <person name="James K.D."/>
            <person name="Harris D.E."/>
            <person name="Quail M.A."/>
            <person name="Kieser H."/>
            <person name="Harper D."/>
            <person name="Bateman A."/>
            <person name="Brown S."/>
            <person name="Chandra G."/>
            <person name="Chen C.W."/>
            <person name="Collins M."/>
            <person name="Cronin A."/>
            <person name="Fraser A."/>
            <person name="Goble A."/>
            <person name="Hidalgo J."/>
            <person name="Hornsby T."/>
            <person name="Howarth S."/>
            <person name="Huang C.-H."/>
            <person name="Kieser T."/>
            <person name="Larke L."/>
            <person name="Murphy L.D."/>
            <person name="Oliver K."/>
            <person name="O'Neil S."/>
            <person name="Rabbinowitsch E."/>
            <person name="Rajandream M.A."/>
            <person name="Rutherford K.M."/>
            <person name="Rutter S."/>
            <person name="Seeger K."/>
            <person name="Saunders D."/>
            <person name="Sharp S."/>
            <person name="Squares R."/>
            <person name="Squares S."/>
            <person name="Taylor K."/>
            <person name="Warren T."/>
            <person name="Wietzorrek A."/>
            <person name="Woodward J.R."/>
            <person name="Barrell B.G."/>
            <person name="Parkhill J."/>
            <person name="Hopwood D.A."/>
        </authorList>
    </citation>
    <scope>NUCLEOTIDE SEQUENCE [LARGE SCALE GENOMIC DNA]</scope>
    <source>
        <strain>ATCC BAA-471 / A3(2) / M145</strain>
    </source>
</reference>
<accession>Q9KYR9</accession>
<gene>
    <name evidence="1" type="primary">ispG2</name>
    <name type="synonym">gcpE2</name>
    <name type="ordered locus">SCO5696</name>
    <name type="ORF">SC5H4.20</name>
</gene>
<keyword id="KW-0004">4Fe-4S</keyword>
<keyword id="KW-0408">Iron</keyword>
<keyword id="KW-0411">Iron-sulfur</keyword>
<keyword id="KW-0414">Isoprene biosynthesis</keyword>
<keyword id="KW-0479">Metal-binding</keyword>
<keyword id="KW-0560">Oxidoreductase</keyword>
<keyword id="KW-1185">Reference proteome</keyword>
<organism>
    <name type="scientific">Streptomyces coelicolor (strain ATCC BAA-471 / A3(2) / M145)</name>
    <dbReference type="NCBI Taxonomy" id="100226"/>
    <lineage>
        <taxon>Bacteria</taxon>
        <taxon>Bacillati</taxon>
        <taxon>Actinomycetota</taxon>
        <taxon>Actinomycetes</taxon>
        <taxon>Kitasatosporales</taxon>
        <taxon>Streptomycetaceae</taxon>
        <taxon>Streptomyces</taxon>
        <taxon>Streptomyces albidoflavus group</taxon>
    </lineage>
</organism>
<comment type="function">
    <text evidence="1">Converts 2C-methyl-D-erythritol 2,4-cyclodiphosphate (ME-2,4cPP) into 1-hydroxy-2-methyl-2-(E)-butenyl 4-diphosphate.</text>
</comment>
<comment type="catalytic activity">
    <reaction evidence="1">
        <text>(2E)-4-hydroxy-3-methylbut-2-enyl diphosphate + oxidized [flavodoxin] + H2O + 2 H(+) = 2-C-methyl-D-erythritol 2,4-cyclic diphosphate + reduced [flavodoxin]</text>
        <dbReference type="Rhea" id="RHEA:43604"/>
        <dbReference type="Rhea" id="RHEA-COMP:10622"/>
        <dbReference type="Rhea" id="RHEA-COMP:10623"/>
        <dbReference type="ChEBI" id="CHEBI:15377"/>
        <dbReference type="ChEBI" id="CHEBI:15378"/>
        <dbReference type="ChEBI" id="CHEBI:57618"/>
        <dbReference type="ChEBI" id="CHEBI:58210"/>
        <dbReference type="ChEBI" id="CHEBI:58483"/>
        <dbReference type="ChEBI" id="CHEBI:128753"/>
        <dbReference type="EC" id="1.17.7.3"/>
    </reaction>
</comment>
<comment type="cofactor">
    <cofactor evidence="1">
        <name>[4Fe-4S] cluster</name>
        <dbReference type="ChEBI" id="CHEBI:49883"/>
    </cofactor>
    <text evidence="1">Binds 1 [4Fe-4S] cluster.</text>
</comment>
<comment type="pathway">
    <text evidence="1">Isoprenoid biosynthesis; isopentenyl diphosphate biosynthesis via DXP pathway; isopentenyl diphosphate from 1-deoxy-D-xylulose 5-phosphate: step 5/6.</text>
</comment>
<comment type="similarity">
    <text evidence="1">Belongs to the IspG family.</text>
</comment>
<proteinExistence type="inferred from homology"/>
<evidence type="ECO:0000255" key="1">
    <source>
        <dbReference type="HAMAP-Rule" id="MF_00159"/>
    </source>
</evidence>
<protein>
    <recommendedName>
        <fullName evidence="1">4-hydroxy-3-methylbut-2-en-1-yl diphosphate synthase (flavodoxin) 2</fullName>
        <ecNumber evidence="1">1.17.7.3</ecNumber>
    </recommendedName>
    <alternativeName>
        <fullName evidence="1">1-hydroxy-2-methyl-2-(E)-butenyl 4-diphosphate synthase 2</fullName>
    </alternativeName>
</protein>
<sequence>MTAISLGMPDVPTRLAERRKSRQIQVGPVAVGGDAPVSVQSMTTTRTSDIGATLQQIAELTASGCQIVRVACPTQDDADALPVIARKSQIPVIADIHFQPKYVFAAIEAGCAAVRVNPGNIKQFDDKVKEIAKAAKDHGTPIRIGVNAGSLDRRLLQKYGRATPEALAESALWEASLFEEHDFRDIKISVKHNDPVVMVEAYRQLAAQCDYPLHLGVTEAGPAFQGTIKSAVAFGALLSQGIGDTIRVSLSAPPVEEIKVGIQILESLNLRQRGLEIVSCPSCGRAQVDVYKLAEEVTAGLEGMEVPLRVAVMGCVVNGPGEAREADLGVASGNGKGQIFVKGEVIKTVPESKIVETLIDEAMKIAEQMEKDGVTSGEPSVSVAG</sequence>
<name>ISPG2_STRCO</name>
<dbReference type="EC" id="1.17.7.3" evidence="1"/>
<dbReference type="EMBL" id="AL939124">
    <property type="protein sequence ID" value="CAB91132.1"/>
    <property type="molecule type" value="Genomic_DNA"/>
</dbReference>
<dbReference type="RefSeq" id="NP_629824.1">
    <property type="nucleotide sequence ID" value="NC_003888.3"/>
</dbReference>
<dbReference type="SMR" id="Q9KYR9"/>
<dbReference type="FunCoup" id="Q9KYR9">
    <property type="interactions" value="58"/>
</dbReference>
<dbReference type="STRING" id="100226.gene:17763352"/>
<dbReference type="PaxDb" id="100226-SCO5696"/>
<dbReference type="KEGG" id="sco:SCO5696"/>
<dbReference type="PATRIC" id="fig|100226.15.peg.5785"/>
<dbReference type="eggNOG" id="COG0821">
    <property type="taxonomic scope" value="Bacteria"/>
</dbReference>
<dbReference type="HOGENOM" id="CLU_042258_0_0_11"/>
<dbReference type="InParanoid" id="Q9KYR9"/>
<dbReference type="OrthoDB" id="9803214at2"/>
<dbReference type="PhylomeDB" id="Q9KYR9"/>
<dbReference type="UniPathway" id="UPA00056">
    <property type="reaction ID" value="UER00096"/>
</dbReference>
<dbReference type="Proteomes" id="UP000001973">
    <property type="component" value="Chromosome"/>
</dbReference>
<dbReference type="GO" id="GO:0051539">
    <property type="term" value="F:4 iron, 4 sulfur cluster binding"/>
    <property type="evidence" value="ECO:0007669"/>
    <property type="project" value="UniProtKB-UniRule"/>
</dbReference>
<dbReference type="GO" id="GO:0046429">
    <property type="term" value="F:4-hydroxy-3-methylbut-2-en-1-yl diphosphate synthase activity (ferredoxin)"/>
    <property type="evidence" value="ECO:0000318"/>
    <property type="project" value="GO_Central"/>
</dbReference>
<dbReference type="GO" id="GO:0141197">
    <property type="term" value="F:4-hydroxy-3-methylbut-2-enyl-diphosphate synthase activity (flavodoxin)"/>
    <property type="evidence" value="ECO:0007669"/>
    <property type="project" value="UniProtKB-EC"/>
</dbReference>
<dbReference type="GO" id="GO:0005506">
    <property type="term" value="F:iron ion binding"/>
    <property type="evidence" value="ECO:0007669"/>
    <property type="project" value="InterPro"/>
</dbReference>
<dbReference type="GO" id="GO:0019288">
    <property type="term" value="P:isopentenyl diphosphate biosynthetic process, methylerythritol 4-phosphate pathway"/>
    <property type="evidence" value="ECO:0000318"/>
    <property type="project" value="GO_Central"/>
</dbReference>
<dbReference type="GO" id="GO:0016114">
    <property type="term" value="P:terpenoid biosynthetic process"/>
    <property type="evidence" value="ECO:0007669"/>
    <property type="project" value="InterPro"/>
</dbReference>
<dbReference type="FunFam" id="3.20.20.20:FF:000003">
    <property type="entry name" value="4-hydroxy-3-methylbut-2-en-1-yl diphosphate synthase (flavodoxin)"/>
    <property type="match status" value="1"/>
</dbReference>
<dbReference type="FunFam" id="3.30.413.10:FF:000001">
    <property type="entry name" value="4-hydroxy-3-methylbut-2-en-1-yl diphosphate synthase (flavodoxin)"/>
    <property type="match status" value="1"/>
</dbReference>
<dbReference type="Gene3D" id="3.20.20.20">
    <property type="entry name" value="Dihydropteroate synthase-like"/>
    <property type="match status" value="1"/>
</dbReference>
<dbReference type="Gene3D" id="3.30.413.10">
    <property type="entry name" value="Sulfite Reductase Hemoprotein, domain 1"/>
    <property type="match status" value="1"/>
</dbReference>
<dbReference type="HAMAP" id="MF_00159">
    <property type="entry name" value="IspG"/>
    <property type="match status" value="1"/>
</dbReference>
<dbReference type="InterPro" id="IPR011005">
    <property type="entry name" value="Dihydropteroate_synth-like_sf"/>
</dbReference>
<dbReference type="InterPro" id="IPR016425">
    <property type="entry name" value="IspG_bac"/>
</dbReference>
<dbReference type="InterPro" id="IPR004588">
    <property type="entry name" value="IspG_bac-typ"/>
</dbReference>
<dbReference type="InterPro" id="IPR045854">
    <property type="entry name" value="NO2/SO3_Rdtase_4Fe4S_sf"/>
</dbReference>
<dbReference type="NCBIfam" id="TIGR00612">
    <property type="entry name" value="ispG_gcpE"/>
    <property type="match status" value="1"/>
</dbReference>
<dbReference type="NCBIfam" id="NF001540">
    <property type="entry name" value="PRK00366.1"/>
    <property type="match status" value="1"/>
</dbReference>
<dbReference type="PANTHER" id="PTHR30454">
    <property type="entry name" value="4-HYDROXY-3-METHYLBUT-2-EN-1-YL DIPHOSPHATE SYNTHASE"/>
    <property type="match status" value="1"/>
</dbReference>
<dbReference type="PANTHER" id="PTHR30454:SF0">
    <property type="entry name" value="4-HYDROXY-3-METHYLBUT-2-EN-1-YL DIPHOSPHATE SYNTHASE (FERREDOXIN), CHLOROPLASTIC"/>
    <property type="match status" value="1"/>
</dbReference>
<dbReference type="Pfam" id="PF04551">
    <property type="entry name" value="GcpE"/>
    <property type="match status" value="1"/>
</dbReference>
<dbReference type="PIRSF" id="PIRSF004640">
    <property type="entry name" value="IspG"/>
    <property type="match status" value="1"/>
</dbReference>
<dbReference type="SUPFAM" id="SSF51717">
    <property type="entry name" value="Dihydropteroate synthetase-like"/>
    <property type="match status" value="1"/>
</dbReference>
<dbReference type="SUPFAM" id="SSF56014">
    <property type="entry name" value="Nitrite and sulphite reductase 4Fe-4S domain-like"/>
    <property type="match status" value="1"/>
</dbReference>
<feature type="chain" id="PRO_0000190636" description="4-hydroxy-3-methylbut-2-en-1-yl diphosphate synthase (flavodoxin) 2">
    <location>
        <begin position="1"/>
        <end position="385"/>
    </location>
</feature>
<feature type="binding site" evidence="1">
    <location>
        <position position="280"/>
    </location>
    <ligand>
        <name>[4Fe-4S] cluster</name>
        <dbReference type="ChEBI" id="CHEBI:49883"/>
    </ligand>
</feature>
<feature type="binding site" evidence="1">
    <location>
        <position position="283"/>
    </location>
    <ligand>
        <name>[4Fe-4S] cluster</name>
        <dbReference type="ChEBI" id="CHEBI:49883"/>
    </ligand>
</feature>
<feature type="binding site" evidence="1">
    <location>
        <position position="315"/>
    </location>
    <ligand>
        <name>[4Fe-4S] cluster</name>
        <dbReference type="ChEBI" id="CHEBI:49883"/>
    </ligand>
</feature>
<feature type="binding site" evidence="1">
    <location>
        <position position="322"/>
    </location>
    <ligand>
        <name>[4Fe-4S] cluster</name>
        <dbReference type="ChEBI" id="CHEBI:49883"/>
    </ligand>
</feature>